<protein>
    <recommendedName>
        <fullName>Actin</fullName>
        <ecNumber evidence="1">3.6.4.-</ecNumber>
    </recommendedName>
</protein>
<sequence>AGFAGDDAPRAVFPSIVGKPKHQGVMVGMGQKDTYVGEEAQSRRGILTIRYPIEHGIVTNWDDMEKIWHHTFYNELRVAPEEHPVLLTEAPMNPKSNREKLTQIMFETFNVPAMYVSIQAVLSLYASGRTTGIVLDSGDGVSHTVPIYEGYALPHAILRLDLAGRDLTDYLTKLLMERGYSFTTTAEREIVRDIKKKLCYVALDIEQELTLLPRLEKSYELPDGQVITVGSERFRCPEALFNPGLLGMGSGIARYLFNSIMKCDVDIRKDLYSNTVLSGGTMMFPGIGERMQKEITTLAPSSMKIKVVASPERKFSVWIGGSILSSLSTFQQMWISKEEYDEAGPAIVHRKCF</sequence>
<proteinExistence type="inferred from homology"/>
<organism>
    <name type="scientific">Acetabularia peniculus</name>
    <name type="common">Green alga</name>
    <name type="synonym">Polyphysa peniculus</name>
    <dbReference type="NCBI Taxonomy" id="35862"/>
    <lineage>
        <taxon>Eukaryota</taxon>
        <taxon>Viridiplantae</taxon>
        <taxon>Chlorophyta</taxon>
        <taxon>Ulvophyceae</taxon>
        <taxon>TCBD clade</taxon>
        <taxon>Dasycladales</taxon>
        <taxon>Polyphysaceae</taxon>
        <taxon>Acetabularia</taxon>
    </lineage>
</organism>
<name>ACT_ACEPE</name>
<feature type="chain" id="PRO_0000088885" description="Actin">
    <location>
        <begin position="1" status="less than"/>
        <end position="353"/>
    </location>
</feature>
<feature type="non-terminal residue">
    <location>
        <position position="1"/>
    </location>
</feature>
<keyword id="KW-0067">ATP-binding</keyword>
<keyword id="KW-0963">Cytoplasm</keyword>
<keyword id="KW-0206">Cytoskeleton</keyword>
<keyword id="KW-0378">Hydrolase</keyword>
<keyword id="KW-0547">Nucleotide-binding</keyword>
<evidence type="ECO:0000250" key="1">
    <source>
        <dbReference type="UniProtKB" id="P68137"/>
    </source>
</evidence>
<evidence type="ECO:0000305" key="2"/>
<reference key="1">
    <citation type="submission" date="1993-12" db="EMBL/GenBank/DDBJ databases">
        <authorList>
            <person name="Frank S."/>
            <person name="Vugrek O."/>
            <person name="Menzel D."/>
        </authorList>
    </citation>
    <scope>NUCLEOTIDE SEQUENCE [GENOMIC DNA]</scope>
</reference>
<dbReference type="EC" id="3.6.4.-" evidence="1"/>
<dbReference type="EMBL" id="Z28698">
    <property type="protein sequence ID" value="CAA82272.1"/>
    <property type="molecule type" value="Genomic_DNA"/>
</dbReference>
<dbReference type="SMR" id="P53491"/>
<dbReference type="GO" id="GO:0005737">
    <property type="term" value="C:cytoplasm"/>
    <property type="evidence" value="ECO:0007669"/>
    <property type="project" value="UniProtKB-KW"/>
</dbReference>
<dbReference type="GO" id="GO:0005856">
    <property type="term" value="C:cytoskeleton"/>
    <property type="evidence" value="ECO:0007669"/>
    <property type="project" value="UniProtKB-SubCell"/>
</dbReference>
<dbReference type="GO" id="GO:0005524">
    <property type="term" value="F:ATP binding"/>
    <property type="evidence" value="ECO:0007669"/>
    <property type="project" value="UniProtKB-KW"/>
</dbReference>
<dbReference type="GO" id="GO:0016787">
    <property type="term" value="F:hydrolase activity"/>
    <property type="evidence" value="ECO:0007669"/>
    <property type="project" value="UniProtKB-KW"/>
</dbReference>
<dbReference type="CDD" id="cd10224">
    <property type="entry name" value="ASKHA_NBD_actin"/>
    <property type="match status" value="1"/>
</dbReference>
<dbReference type="FunFam" id="3.30.420.40:FF:000291">
    <property type="entry name" value="Actin, alpha skeletal muscle"/>
    <property type="match status" value="1"/>
</dbReference>
<dbReference type="FunFam" id="3.90.640.10:FF:000047">
    <property type="entry name" value="Actin, alpha skeletal muscle"/>
    <property type="match status" value="1"/>
</dbReference>
<dbReference type="FunFam" id="3.30.420.40:FF:000404">
    <property type="entry name" value="Major actin"/>
    <property type="match status" value="1"/>
</dbReference>
<dbReference type="FunFam" id="3.30.420.40:FF:000058">
    <property type="entry name" value="Putative actin-related protein 5"/>
    <property type="match status" value="1"/>
</dbReference>
<dbReference type="Gene3D" id="3.30.420.40">
    <property type="match status" value="2"/>
</dbReference>
<dbReference type="Gene3D" id="3.90.640.10">
    <property type="entry name" value="Actin, Chain A, domain 4"/>
    <property type="match status" value="1"/>
</dbReference>
<dbReference type="InterPro" id="IPR004000">
    <property type="entry name" value="Actin"/>
</dbReference>
<dbReference type="InterPro" id="IPR020902">
    <property type="entry name" value="Actin/actin-like_CS"/>
</dbReference>
<dbReference type="InterPro" id="IPR004001">
    <property type="entry name" value="Actin_CS"/>
</dbReference>
<dbReference type="InterPro" id="IPR043129">
    <property type="entry name" value="ATPase_NBD"/>
</dbReference>
<dbReference type="PANTHER" id="PTHR11937">
    <property type="entry name" value="ACTIN"/>
    <property type="match status" value="1"/>
</dbReference>
<dbReference type="Pfam" id="PF00022">
    <property type="entry name" value="Actin"/>
    <property type="match status" value="1"/>
</dbReference>
<dbReference type="PRINTS" id="PR00190">
    <property type="entry name" value="ACTIN"/>
</dbReference>
<dbReference type="SMART" id="SM00268">
    <property type="entry name" value="ACTIN"/>
    <property type="match status" value="1"/>
</dbReference>
<dbReference type="SUPFAM" id="SSF53067">
    <property type="entry name" value="Actin-like ATPase domain"/>
    <property type="match status" value="2"/>
</dbReference>
<dbReference type="PROSITE" id="PS00406">
    <property type="entry name" value="ACTINS_1"/>
    <property type="match status" value="1"/>
</dbReference>
<dbReference type="PROSITE" id="PS00432">
    <property type="entry name" value="ACTINS_2"/>
    <property type="match status" value="1"/>
</dbReference>
<dbReference type="PROSITE" id="PS01132">
    <property type="entry name" value="ACTINS_ACT_LIKE"/>
    <property type="match status" value="1"/>
</dbReference>
<comment type="function">
    <text>Actins are highly conserved proteins that are involved in various types of cell motility and are ubiquitously expressed in all eukaryotic cells.</text>
</comment>
<comment type="function">
    <text>Essential component of cell cytoskeleton; plays an important role in cytoplasmic streaming, cell shape determination, cell division, organelle movement and extension growth.</text>
</comment>
<comment type="catalytic activity">
    <reaction evidence="1">
        <text>ATP + H2O = ADP + phosphate + H(+)</text>
        <dbReference type="Rhea" id="RHEA:13065"/>
        <dbReference type="ChEBI" id="CHEBI:15377"/>
        <dbReference type="ChEBI" id="CHEBI:15378"/>
        <dbReference type="ChEBI" id="CHEBI:30616"/>
        <dbReference type="ChEBI" id="CHEBI:43474"/>
        <dbReference type="ChEBI" id="CHEBI:456216"/>
    </reaction>
</comment>
<comment type="subcellular location">
    <subcellularLocation>
        <location>Cytoplasm</location>
        <location>Cytoskeleton</location>
    </subcellularLocation>
</comment>
<comment type="similarity">
    <text evidence="2">Belongs to the actin family.</text>
</comment>
<accession>P53491</accession>